<geneLocation type="chloroplast"/>
<gene>
    <name type="primary">ycf33</name>
</gene>
<sequence length="64" mass="7608">MNDFWTNVFRYPRFFISSLIGLLLVILSPFKNLFKIAKLRIFVILFILLFFLGIYFVLVNMTGL</sequence>
<protein>
    <recommendedName>
        <fullName>Uncharacterized protein ycf33</fullName>
    </recommendedName>
</protein>
<feature type="chain" id="PRO_0000217342" description="Uncharacterized protein ycf33">
    <location>
        <begin position="1"/>
        <end position="64"/>
    </location>
</feature>
<organism>
    <name type="scientific">Trieres chinensis</name>
    <name type="common">Marine centric diatom</name>
    <name type="synonym">Odontella sinensis</name>
    <dbReference type="NCBI Taxonomy" id="1514140"/>
    <lineage>
        <taxon>Eukaryota</taxon>
        <taxon>Sar</taxon>
        <taxon>Stramenopiles</taxon>
        <taxon>Ochrophyta</taxon>
        <taxon>Bacillariophyta</taxon>
        <taxon>Mediophyceae</taxon>
        <taxon>Biddulphiophycidae</taxon>
        <taxon>Eupodiscales</taxon>
        <taxon>Parodontellaceae</taxon>
        <taxon>Trieres</taxon>
    </lineage>
</organism>
<evidence type="ECO:0000305" key="1"/>
<accession>P49532</accession>
<proteinExistence type="inferred from homology"/>
<keyword id="KW-0150">Chloroplast</keyword>
<keyword id="KW-0934">Plastid</keyword>
<name>YCF33_TRICV</name>
<reference key="1">
    <citation type="journal article" date="1995" name="Plant Mol. Biol. Rep.">
        <title>The chloroplast genome of a chlorophyll a+c-containing alga, Odontella sinensis.</title>
        <authorList>
            <person name="Kowallik K.V."/>
            <person name="Stoebe B."/>
            <person name="Schaffran I."/>
            <person name="Kroth-Pancic P."/>
            <person name="Freier U."/>
        </authorList>
    </citation>
    <scope>NUCLEOTIDE SEQUENCE [LARGE SCALE GENOMIC DNA]</scope>
</reference>
<dbReference type="EMBL" id="Z67753">
    <property type="protein sequence ID" value="CAA91682.1"/>
    <property type="molecule type" value="Genomic_DNA"/>
</dbReference>
<dbReference type="PIR" id="S78309">
    <property type="entry name" value="S78309"/>
</dbReference>
<dbReference type="RefSeq" id="NP_043650.1">
    <property type="nucleotide sequence ID" value="NC_001713.1"/>
</dbReference>
<dbReference type="SMR" id="P49532"/>
<dbReference type="GeneID" id="801797"/>
<dbReference type="GO" id="GO:0009507">
    <property type="term" value="C:chloroplast"/>
    <property type="evidence" value="ECO:0007669"/>
    <property type="project" value="UniProtKB-SubCell"/>
</dbReference>
<dbReference type="InterPro" id="IPR008470">
    <property type="entry name" value="Uncharacterised_Ycf33"/>
</dbReference>
<dbReference type="Pfam" id="PF05421">
    <property type="entry name" value="DUF751"/>
    <property type="match status" value="1"/>
</dbReference>
<comment type="subcellular location">
    <subcellularLocation>
        <location>Plastid</location>
        <location>Chloroplast</location>
    </subcellularLocation>
</comment>
<comment type="similarity">
    <text evidence="1">Belongs to the ycf33 family.</text>
</comment>